<comment type="function">
    <text evidence="1">One of the components of the core complex of photosystem II (PSII). It binds chlorophyll and helps catalyze the primary light-induced photochemical processes of PSII. PSII is a light-driven water:plastoquinone oxidoreductase, using light energy to abstract electrons from H(2)O, generating O(2) and a proton gradient subsequently used for ATP formation.</text>
</comment>
<comment type="cofactor">
    <text evidence="1">Binds multiple chlorophylls. PSII binds additional chlorophylls, carotenoids and specific lipids.</text>
</comment>
<comment type="subunit">
    <text evidence="1">PSII is composed of 1 copy each of membrane proteins PsbA, PsbB, PsbC, PsbD, PsbE, PsbF, PsbH, PsbI, PsbJ, PsbK, PsbL, PsbM, PsbT, PsbX, PsbY, PsbZ, Psb30/Ycf12, at least 3 peripheral proteins of the oxygen-evolving complex and a large number of cofactors. It forms dimeric complexes.</text>
</comment>
<comment type="subcellular location">
    <subcellularLocation>
        <location evidence="1">Plastid</location>
        <location evidence="1">Chloroplast thylakoid membrane</location>
        <topology evidence="1">Multi-pass membrane protein</topology>
    </subcellularLocation>
</comment>
<comment type="similarity">
    <text evidence="1">Belongs to the PsbB/PsbC family. PsbB subfamily.</text>
</comment>
<keyword id="KW-0148">Chlorophyll</keyword>
<keyword id="KW-0150">Chloroplast</keyword>
<keyword id="KW-0157">Chromophore</keyword>
<keyword id="KW-0472">Membrane</keyword>
<keyword id="KW-0602">Photosynthesis</keyword>
<keyword id="KW-0604">Photosystem II</keyword>
<keyword id="KW-0934">Plastid</keyword>
<keyword id="KW-0793">Thylakoid</keyword>
<keyword id="KW-0812">Transmembrane</keyword>
<keyword id="KW-1133">Transmembrane helix</keyword>
<protein>
    <recommendedName>
        <fullName evidence="1">Photosystem II CP47 reaction center protein</fullName>
    </recommendedName>
    <alternativeName>
        <fullName evidence="1">PSII 47 kDa protein</fullName>
    </alternativeName>
    <alternativeName>
        <fullName evidence="1">Protein CP-47</fullName>
    </alternativeName>
</protein>
<sequence length="508" mass="56015">MGLPWYRVHTVVLNDPGRLLSVHIMHTALVAGWAGSMALYELAVFDPSDPVLDPMWRQGMFVIPFMTRLGITNSWGGWSITGGTVTNPGIWSYEGVAGAHIVFSGLCFLAAIWHWVYWDLEIFCDERTGKPSLDLPKIFGIHLFLSGVACFGFGAFHVTGLYGPGIWVSDPYGLTGKVQPVNPAWGVEGFDPFVPGGIASHHIAAGTLGILAGLFHLSVRPPQRLYKGLRMGNIETVLSSSIAAVFFAAFVVAGTMWYGSATTPIELFGPTRYQWDQGYFQQEIYRRVSAGLAENQSLSEAWSKIPEKLAFYDYIGNNPAKGGLFRAGSMDNGDGIAVGWLGHPIFRDKEGRELFVRRMPTFFETFPVVLVDGDGIVRADVPFRRAESKYSVEQVGVTVEFYGGELNGVSYSDPATVKKYARRAQLGEIFELDRATLKSDGVFRSSPRGWFTFGHASFALLFFFGHIWHGARTLFRDVFAGIDPDLDAQVEFGAFQKLGDPTTKRQAA</sequence>
<geneLocation type="chloroplast"/>
<accession>Q2MIG2</accession>
<reference key="1">
    <citation type="journal article" date="2006" name="Theor. Appl. Genet.">
        <title>Complete chloroplast genome sequences of Solanum bulbocastanum, Solanum lycopersicum and comparative analyses with other Solanaceae genomes.</title>
        <authorList>
            <person name="Daniell H."/>
            <person name="Lee S.-B."/>
            <person name="Grevich J."/>
            <person name="Saski C."/>
            <person name="Quesada-Vargas T."/>
            <person name="Guda C."/>
            <person name="Tomkins J."/>
            <person name="Jansen R.K."/>
        </authorList>
    </citation>
    <scope>NUCLEOTIDE SEQUENCE [LARGE SCALE GENOMIC DNA]</scope>
    <source>
        <strain>cv. PT29</strain>
    </source>
</reference>
<dbReference type="EMBL" id="DQ347958">
    <property type="protein sequence ID" value="ABC56238.1"/>
    <property type="molecule type" value="Genomic_DNA"/>
</dbReference>
<dbReference type="RefSeq" id="YP_538875.1">
    <property type="nucleotide sequence ID" value="NC_007943.1"/>
</dbReference>
<dbReference type="SMR" id="Q2MIG2"/>
<dbReference type="GeneID" id="3989518"/>
<dbReference type="GO" id="GO:0009535">
    <property type="term" value="C:chloroplast thylakoid membrane"/>
    <property type="evidence" value="ECO:0007669"/>
    <property type="project" value="UniProtKB-SubCell"/>
</dbReference>
<dbReference type="GO" id="GO:0009523">
    <property type="term" value="C:photosystem II"/>
    <property type="evidence" value="ECO:0007669"/>
    <property type="project" value="UniProtKB-KW"/>
</dbReference>
<dbReference type="GO" id="GO:0016168">
    <property type="term" value="F:chlorophyll binding"/>
    <property type="evidence" value="ECO:0007669"/>
    <property type="project" value="UniProtKB-UniRule"/>
</dbReference>
<dbReference type="GO" id="GO:0045156">
    <property type="term" value="F:electron transporter, transferring electrons within the cyclic electron transport pathway of photosynthesis activity"/>
    <property type="evidence" value="ECO:0007669"/>
    <property type="project" value="InterPro"/>
</dbReference>
<dbReference type="GO" id="GO:0009772">
    <property type="term" value="P:photosynthetic electron transport in photosystem II"/>
    <property type="evidence" value="ECO:0007669"/>
    <property type="project" value="InterPro"/>
</dbReference>
<dbReference type="FunFam" id="3.10.680.10:FF:000001">
    <property type="entry name" value="Photosystem II CP47 reaction center protein"/>
    <property type="match status" value="1"/>
</dbReference>
<dbReference type="Gene3D" id="3.10.680.10">
    <property type="entry name" value="Photosystem II CP47 reaction center protein"/>
    <property type="match status" value="1"/>
</dbReference>
<dbReference type="HAMAP" id="MF_01495">
    <property type="entry name" value="PSII_PsbB_CP47"/>
    <property type="match status" value="1"/>
</dbReference>
<dbReference type="InterPro" id="IPR000932">
    <property type="entry name" value="PS_antenna-like"/>
</dbReference>
<dbReference type="InterPro" id="IPR036001">
    <property type="entry name" value="PS_II_antenna-like_sf"/>
</dbReference>
<dbReference type="InterPro" id="IPR017486">
    <property type="entry name" value="PSII_PsbB"/>
</dbReference>
<dbReference type="NCBIfam" id="TIGR03039">
    <property type="entry name" value="PS_II_CP47"/>
    <property type="match status" value="1"/>
</dbReference>
<dbReference type="PANTHER" id="PTHR33180">
    <property type="entry name" value="PHOTOSYSTEM II CP43 REACTION CENTER PROTEIN"/>
    <property type="match status" value="1"/>
</dbReference>
<dbReference type="PANTHER" id="PTHR33180:SF35">
    <property type="entry name" value="PHOTOSYSTEM II CP47 REACTION CENTER PROTEIN"/>
    <property type="match status" value="1"/>
</dbReference>
<dbReference type="Pfam" id="PF00421">
    <property type="entry name" value="PSII"/>
    <property type="match status" value="1"/>
</dbReference>
<dbReference type="SUPFAM" id="SSF161077">
    <property type="entry name" value="Photosystem II antenna protein-like"/>
    <property type="match status" value="1"/>
</dbReference>
<feature type="chain" id="PRO_0000359862" description="Photosystem II CP47 reaction center protein">
    <location>
        <begin position="1"/>
        <end position="508"/>
    </location>
</feature>
<feature type="transmembrane region" description="Helical" evidence="1">
    <location>
        <begin position="21"/>
        <end position="36"/>
    </location>
</feature>
<feature type="transmembrane region" description="Helical" evidence="1">
    <location>
        <begin position="101"/>
        <end position="115"/>
    </location>
</feature>
<feature type="transmembrane region" description="Helical" evidence="1">
    <location>
        <begin position="140"/>
        <end position="156"/>
    </location>
</feature>
<feature type="transmembrane region" description="Helical" evidence="1">
    <location>
        <begin position="203"/>
        <end position="218"/>
    </location>
</feature>
<feature type="transmembrane region" description="Helical" evidence="1">
    <location>
        <begin position="237"/>
        <end position="252"/>
    </location>
</feature>
<feature type="transmembrane region" description="Helical" evidence="1">
    <location>
        <begin position="457"/>
        <end position="472"/>
    </location>
</feature>
<proteinExistence type="inferred from homology"/>
<evidence type="ECO:0000255" key="1">
    <source>
        <dbReference type="HAMAP-Rule" id="MF_01495"/>
    </source>
</evidence>
<organism>
    <name type="scientific">Solanum bulbocastanum</name>
    <name type="common">Wild potato</name>
    <dbReference type="NCBI Taxonomy" id="147425"/>
    <lineage>
        <taxon>Eukaryota</taxon>
        <taxon>Viridiplantae</taxon>
        <taxon>Streptophyta</taxon>
        <taxon>Embryophyta</taxon>
        <taxon>Tracheophyta</taxon>
        <taxon>Spermatophyta</taxon>
        <taxon>Magnoliopsida</taxon>
        <taxon>eudicotyledons</taxon>
        <taxon>Gunneridae</taxon>
        <taxon>Pentapetalae</taxon>
        <taxon>asterids</taxon>
        <taxon>lamiids</taxon>
        <taxon>Solanales</taxon>
        <taxon>Solanaceae</taxon>
        <taxon>Solanoideae</taxon>
        <taxon>Solaneae</taxon>
        <taxon>Solanum</taxon>
    </lineage>
</organism>
<gene>
    <name evidence="1" type="primary">psbB</name>
</gene>
<name>PSBB_SOLBU</name>